<reference key="1">
    <citation type="journal article" date="1997" name="Nature">
        <title>The nucleotide sequence of Saccharomyces cerevisiae chromosome IV.</title>
        <authorList>
            <person name="Jacq C."/>
            <person name="Alt-Moerbe J."/>
            <person name="Andre B."/>
            <person name="Arnold W."/>
            <person name="Bahr A."/>
            <person name="Ballesta J.P.G."/>
            <person name="Bargues M."/>
            <person name="Baron L."/>
            <person name="Becker A."/>
            <person name="Biteau N."/>
            <person name="Bloecker H."/>
            <person name="Blugeon C."/>
            <person name="Boskovic J."/>
            <person name="Brandt P."/>
            <person name="Brueckner M."/>
            <person name="Buitrago M.J."/>
            <person name="Coster F."/>
            <person name="Delaveau T."/>
            <person name="del Rey F."/>
            <person name="Dujon B."/>
            <person name="Eide L.G."/>
            <person name="Garcia-Cantalejo J.M."/>
            <person name="Goffeau A."/>
            <person name="Gomez-Peris A."/>
            <person name="Granotier C."/>
            <person name="Hanemann V."/>
            <person name="Hankeln T."/>
            <person name="Hoheisel J.D."/>
            <person name="Jaeger W."/>
            <person name="Jimenez A."/>
            <person name="Jonniaux J.-L."/>
            <person name="Kraemer C."/>
            <person name="Kuester H."/>
            <person name="Laamanen P."/>
            <person name="Legros Y."/>
            <person name="Louis E.J."/>
            <person name="Moeller-Rieker S."/>
            <person name="Monnet A."/>
            <person name="Moro M."/>
            <person name="Mueller-Auer S."/>
            <person name="Nussbaumer B."/>
            <person name="Paricio N."/>
            <person name="Paulin L."/>
            <person name="Perea J."/>
            <person name="Perez-Alonso M."/>
            <person name="Perez-Ortin J.E."/>
            <person name="Pohl T.M."/>
            <person name="Prydz H."/>
            <person name="Purnelle B."/>
            <person name="Rasmussen S.W."/>
            <person name="Remacha M.A."/>
            <person name="Revuelta J.L."/>
            <person name="Rieger M."/>
            <person name="Salom D."/>
            <person name="Saluz H.P."/>
            <person name="Saiz J.E."/>
            <person name="Saren A.-M."/>
            <person name="Schaefer M."/>
            <person name="Scharfe M."/>
            <person name="Schmidt E.R."/>
            <person name="Schneider C."/>
            <person name="Scholler P."/>
            <person name="Schwarz S."/>
            <person name="Soler-Mira A."/>
            <person name="Urrestarazu L.A."/>
            <person name="Verhasselt P."/>
            <person name="Vissers S."/>
            <person name="Voet M."/>
            <person name="Volckaert G."/>
            <person name="Wagner G."/>
            <person name="Wambutt R."/>
            <person name="Wedler E."/>
            <person name="Wedler H."/>
            <person name="Woelfl S."/>
            <person name="Harris D.E."/>
            <person name="Bowman S."/>
            <person name="Brown D."/>
            <person name="Churcher C.M."/>
            <person name="Connor R."/>
            <person name="Dedman K."/>
            <person name="Gentles S."/>
            <person name="Hamlin N."/>
            <person name="Hunt S."/>
            <person name="Jones L."/>
            <person name="McDonald S."/>
            <person name="Murphy L.D."/>
            <person name="Niblett D."/>
            <person name="Odell C."/>
            <person name="Oliver K."/>
            <person name="Rajandream M.A."/>
            <person name="Richards C."/>
            <person name="Shore L."/>
            <person name="Walsh S.V."/>
            <person name="Barrell B.G."/>
            <person name="Dietrich F.S."/>
            <person name="Mulligan J.T."/>
            <person name="Allen E."/>
            <person name="Araujo R."/>
            <person name="Aviles E."/>
            <person name="Berno A."/>
            <person name="Carpenter J."/>
            <person name="Chen E."/>
            <person name="Cherry J.M."/>
            <person name="Chung E."/>
            <person name="Duncan M."/>
            <person name="Hunicke-Smith S."/>
            <person name="Hyman R.W."/>
            <person name="Komp C."/>
            <person name="Lashkari D."/>
            <person name="Lew H."/>
            <person name="Lin D."/>
            <person name="Mosedale D."/>
            <person name="Nakahara K."/>
            <person name="Namath A."/>
            <person name="Oefner P."/>
            <person name="Oh C."/>
            <person name="Petel F.X."/>
            <person name="Roberts D."/>
            <person name="Schramm S."/>
            <person name="Schroeder M."/>
            <person name="Shogren T."/>
            <person name="Shroff N."/>
            <person name="Winant A."/>
            <person name="Yelton M.A."/>
            <person name="Botstein D."/>
            <person name="Davis R.W."/>
            <person name="Johnston M."/>
            <person name="Andrews S."/>
            <person name="Brinkman R."/>
            <person name="Cooper J."/>
            <person name="Ding H."/>
            <person name="Du Z."/>
            <person name="Favello A."/>
            <person name="Fulton L."/>
            <person name="Gattung S."/>
            <person name="Greco T."/>
            <person name="Hallsworth K."/>
            <person name="Hawkins J."/>
            <person name="Hillier L.W."/>
            <person name="Jier M."/>
            <person name="Johnson D."/>
            <person name="Johnston L."/>
            <person name="Kirsten J."/>
            <person name="Kucaba T."/>
            <person name="Langston Y."/>
            <person name="Latreille P."/>
            <person name="Le T."/>
            <person name="Mardis E."/>
            <person name="Menezes S."/>
            <person name="Miller N."/>
            <person name="Nhan M."/>
            <person name="Pauley A."/>
            <person name="Peluso D."/>
            <person name="Rifkin L."/>
            <person name="Riles L."/>
            <person name="Taich A."/>
            <person name="Trevaskis E."/>
            <person name="Vignati D."/>
            <person name="Wilcox L."/>
            <person name="Wohldman P."/>
            <person name="Vaudin M."/>
            <person name="Wilson R."/>
            <person name="Waterston R."/>
            <person name="Albermann K."/>
            <person name="Hani J."/>
            <person name="Heumann K."/>
            <person name="Kleine K."/>
            <person name="Mewes H.-W."/>
            <person name="Zollner A."/>
            <person name="Zaccaria P."/>
        </authorList>
    </citation>
    <scope>NUCLEOTIDE SEQUENCE [LARGE SCALE GENOMIC DNA]</scope>
    <source>
        <strain>ATCC 204508 / S288c</strain>
    </source>
</reference>
<reference key="2">
    <citation type="journal article" date="2014" name="G3 (Bethesda)">
        <title>The reference genome sequence of Saccharomyces cerevisiae: Then and now.</title>
        <authorList>
            <person name="Engel S.R."/>
            <person name="Dietrich F.S."/>
            <person name="Fisk D.G."/>
            <person name="Binkley G."/>
            <person name="Balakrishnan R."/>
            <person name="Costanzo M.C."/>
            <person name="Dwight S.S."/>
            <person name="Hitz B.C."/>
            <person name="Karra K."/>
            <person name="Nash R.S."/>
            <person name="Weng S."/>
            <person name="Wong E.D."/>
            <person name="Lloyd P."/>
            <person name="Skrzypek M.S."/>
            <person name="Miyasato S.R."/>
            <person name="Simison M."/>
            <person name="Cherry J.M."/>
        </authorList>
    </citation>
    <scope>GENOME REANNOTATION</scope>
    <source>
        <strain>ATCC 204508 / S288c</strain>
    </source>
</reference>
<reference key="3">
    <citation type="journal article" date="1997" name="Nucleic Acids Res.">
        <title>Variations of the C2H2 zinc finger motif in the yeast genome and classification of yeast zinc finger proteins.</title>
        <authorList>
            <person name="Boehm S."/>
            <person name="Frishman D."/>
            <person name="Mewes H.-W."/>
        </authorList>
    </citation>
    <scope>DOMAIN ATYPICAL ZINC-FINGER</scope>
</reference>
<reference key="4">
    <citation type="journal article" date="1999" name="Mol. Gen. Genet.">
        <title>Yeast genes GIS1-4: multicopy suppressors of the Gal- phenotype of snf1 mig1 srb8/10/11 cells.</title>
        <authorList>
            <person name="Balciunas D."/>
            <person name="Ronne H."/>
        </authorList>
    </citation>
    <scope>FUNCTION IN TRANSCRIPTIONAL ACTIVATION</scope>
</reference>
<reference key="5">
    <citation type="journal article" date="1999" name="Mol. Cell. Biol.">
        <title>RPH1 and GIS1 are damage-responsive repressors of PHR1.</title>
        <authorList>
            <person name="Jang Y.K."/>
            <person name="Wang L."/>
            <person name="Sancar G.B."/>
        </authorList>
    </citation>
    <scope>FUNCTION IN TRANSCRIPTIONAL REPRESSION</scope>
</reference>
<reference key="6">
    <citation type="journal article" date="2000" name="EMBO J.">
        <title>Saccharomyces cerevisiae Ras/cAMP pathway controls post-diauxic shift element-dependent transcription through the zinc finger protein Gis1.</title>
        <authorList>
            <person name="Pedruzzi I."/>
            <person name="Buerckert N."/>
            <person name="Egger P."/>
            <person name="De Virgilio C."/>
        </authorList>
    </citation>
    <scope>FUNCTION</scope>
    <scope>INDUCTION</scope>
</reference>
<reference key="7">
    <citation type="journal article" date="2003" name="J. Biol. Chem.">
        <title>Regulation of the yeast DPP1-encoded diacylglycerol pyrophosphate phosphatase by transcription factor Gis1p.</title>
        <authorList>
            <person name="Oshiro J."/>
            <person name="Han G.-S."/>
            <person name="Iwanyshyn W.M."/>
            <person name="Conover K."/>
            <person name="Carman G.M."/>
        </authorList>
    </citation>
    <scope>FUNCTION</scope>
    <scope>REPRESSION OF DPP1 EXPRESSION</scope>
</reference>
<reference key="8">
    <citation type="journal article" date="2003" name="Nature">
        <title>Global analysis of protein localization in budding yeast.</title>
        <authorList>
            <person name="Huh W.-K."/>
            <person name="Falvo J.V."/>
            <person name="Gerke L.C."/>
            <person name="Carroll A.S."/>
            <person name="Howson R.W."/>
            <person name="Weissman J.S."/>
            <person name="O'Shea E.K."/>
        </authorList>
    </citation>
    <scope>SUBCELLULAR LOCATION [LARGE SCALE ANALYSIS]</scope>
</reference>
<reference key="9">
    <citation type="journal article" date="2003" name="Nature">
        <title>Global analysis of protein expression in yeast.</title>
        <authorList>
            <person name="Ghaemmaghami S."/>
            <person name="Huh W.-K."/>
            <person name="Bower K."/>
            <person name="Howson R.W."/>
            <person name="Belle A."/>
            <person name="Dephoure N."/>
            <person name="O'Shea E.K."/>
            <person name="Weissman J.S."/>
        </authorList>
    </citation>
    <scope>LEVEL OF PROTEIN EXPRESSION [LARGE SCALE ANALYSIS]</scope>
</reference>
<reference key="10">
    <citation type="journal article" date="2007" name="J. Proteome Res.">
        <title>Large-scale phosphorylation analysis of alpha-factor-arrested Saccharomyces cerevisiae.</title>
        <authorList>
            <person name="Li X."/>
            <person name="Gerber S.A."/>
            <person name="Rudner A.D."/>
            <person name="Beausoleil S.A."/>
            <person name="Haas W."/>
            <person name="Villen J."/>
            <person name="Elias J.E."/>
            <person name="Gygi S.P."/>
        </authorList>
    </citation>
    <scope>IDENTIFICATION BY MASS SPECTROMETRY [LARGE SCALE ANALYSIS]</scope>
    <source>
        <strain>ADR376</strain>
    </source>
</reference>
<reference key="11">
    <citation type="journal article" date="2008" name="Mol. Cell. Proteomics">
        <title>A multidimensional chromatography technology for in-depth phosphoproteome analysis.</title>
        <authorList>
            <person name="Albuquerque C.P."/>
            <person name="Smolka M.B."/>
            <person name="Payne S.H."/>
            <person name="Bafna V."/>
            <person name="Eng J."/>
            <person name="Zhou H."/>
        </authorList>
    </citation>
    <scope>PHOSPHORYLATION [LARGE SCALE ANALYSIS] AT SER-70; SER-696 AND SER-747</scope>
    <scope>IDENTIFICATION BY MASS SPECTROMETRY [LARGE SCALE ANALYSIS]</scope>
</reference>
<reference key="12">
    <citation type="journal article" date="2009" name="Science">
        <title>Global analysis of Cdk1 substrate phosphorylation sites provides insights into evolution.</title>
        <authorList>
            <person name="Holt L.J."/>
            <person name="Tuch B.B."/>
            <person name="Villen J."/>
            <person name="Johnson A.D."/>
            <person name="Gygi S.P."/>
            <person name="Morgan D.O."/>
        </authorList>
    </citation>
    <scope>PHOSPHORYLATION [LARGE SCALE ANALYSIS] AT SER-343; SER-690; SER-694; SER-696 AND SER-734</scope>
    <scope>IDENTIFICATION BY MASS SPECTROMETRY [LARGE SCALE ANALYSIS]</scope>
</reference>
<dbReference type="EMBL" id="Z47746">
    <property type="protein sequence ID" value="CAA87670.1"/>
    <property type="molecule type" value="Genomic_DNA"/>
</dbReference>
<dbReference type="EMBL" id="BK006938">
    <property type="protein sequence ID" value="DAA11941.1"/>
    <property type="molecule type" value="Genomic_DNA"/>
</dbReference>
<dbReference type="PIR" id="S51245">
    <property type="entry name" value="S51245"/>
</dbReference>
<dbReference type="RefSeq" id="NP_010381.1">
    <property type="nucleotide sequence ID" value="NM_001180404.1"/>
</dbReference>
<dbReference type="SMR" id="Q03833"/>
<dbReference type="BioGRID" id="32151">
    <property type="interactions" value="298"/>
</dbReference>
<dbReference type="FunCoup" id="Q03833">
    <property type="interactions" value="915"/>
</dbReference>
<dbReference type="IntAct" id="Q03833">
    <property type="interactions" value="34"/>
</dbReference>
<dbReference type="MINT" id="Q03833"/>
<dbReference type="STRING" id="4932.YDR096W"/>
<dbReference type="GlyGen" id="Q03833">
    <property type="glycosylation" value="2 sites, 1 O-linked glycan (2 sites)"/>
</dbReference>
<dbReference type="iPTMnet" id="Q03833"/>
<dbReference type="PaxDb" id="4932-YDR096W"/>
<dbReference type="PeptideAtlas" id="Q03833"/>
<dbReference type="EnsemblFungi" id="YDR096W_mRNA">
    <property type="protein sequence ID" value="YDR096W"/>
    <property type="gene ID" value="YDR096W"/>
</dbReference>
<dbReference type="GeneID" id="851670"/>
<dbReference type="KEGG" id="sce:YDR096W"/>
<dbReference type="AGR" id="SGD:S000002503"/>
<dbReference type="SGD" id="S000002503">
    <property type="gene designation" value="GIS1"/>
</dbReference>
<dbReference type="VEuPathDB" id="FungiDB:YDR096W"/>
<dbReference type="eggNOG" id="KOG0958">
    <property type="taxonomic scope" value="Eukaryota"/>
</dbReference>
<dbReference type="eggNOG" id="KOG1721">
    <property type="taxonomic scope" value="Eukaryota"/>
</dbReference>
<dbReference type="HOGENOM" id="CLU_008557_0_0_1"/>
<dbReference type="InParanoid" id="Q03833"/>
<dbReference type="OrthoDB" id="9547406at2759"/>
<dbReference type="BioCyc" id="YEAST:G3O-29699-MONOMER"/>
<dbReference type="Reactome" id="R-SCE-3214842">
    <property type="pathway name" value="HDMs demethylate histones"/>
</dbReference>
<dbReference type="Reactome" id="R-SCE-5693565">
    <property type="pathway name" value="Recruitment and ATM-mediated phosphorylation of repair and signaling proteins at DNA double strand breaks"/>
</dbReference>
<dbReference type="Reactome" id="R-SCE-9018519">
    <property type="pathway name" value="Estrogen-dependent gene expression"/>
</dbReference>
<dbReference type="BioGRID-ORCS" id="851670">
    <property type="hits" value="0 hits in 13 CRISPR screens"/>
</dbReference>
<dbReference type="PRO" id="PR:Q03833"/>
<dbReference type="Proteomes" id="UP000002311">
    <property type="component" value="Chromosome IV"/>
</dbReference>
<dbReference type="RNAct" id="Q03833">
    <property type="molecule type" value="protein"/>
</dbReference>
<dbReference type="GO" id="GO:0000785">
    <property type="term" value="C:chromatin"/>
    <property type="evidence" value="ECO:0000318"/>
    <property type="project" value="GO_Central"/>
</dbReference>
<dbReference type="GO" id="GO:0005829">
    <property type="term" value="C:cytosol"/>
    <property type="evidence" value="ECO:0000314"/>
    <property type="project" value="SGD"/>
</dbReference>
<dbReference type="GO" id="GO:0005739">
    <property type="term" value="C:mitochondrion"/>
    <property type="evidence" value="ECO:0007005"/>
    <property type="project" value="SGD"/>
</dbReference>
<dbReference type="GO" id="GO:0005634">
    <property type="term" value="C:nucleus"/>
    <property type="evidence" value="ECO:0000314"/>
    <property type="project" value="SGD"/>
</dbReference>
<dbReference type="GO" id="GO:0001227">
    <property type="term" value="F:DNA-binding transcription repressor activity, RNA polymerase II-specific"/>
    <property type="evidence" value="ECO:0000314"/>
    <property type="project" value="SGD"/>
</dbReference>
<dbReference type="GO" id="GO:0051864">
    <property type="term" value="F:histone H3K36 demethylase activity"/>
    <property type="evidence" value="ECO:0000315"/>
    <property type="project" value="SGD"/>
</dbReference>
<dbReference type="GO" id="GO:0032454">
    <property type="term" value="F:histone H3K9 demethylase activity"/>
    <property type="evidence" value="ECO:0000318"/>
    <property type="project" value="GO_Central"/>
</dbReference>
<dbReference type="GO" id="GO:0000978">
    <property type="term" value="F:RNA polymerase II cis-regulatory region sequence-specific DNA binding"/>
    <property type="evidence" value="ECO:0000314"/>
    <property type="project" value="SGD"/>
</dbReference>
<dbReference type="GO" id="GO:0008270">
    <property type="term" value="F:zinc ion binding"/>
    <property type="evidence" value="ECO:0007669"/>
    <property type="project" value="UniProtKB-KW"/>
</dbReference>
<dbReference type="GO" id="GO:0006338">
    <property type="term" value="P:chromatin remodeling"/>
    <property type="evidence" value="ECO:0000318"/>
    <property type="project" value="GO_Central"/>
</dbReference>
<dbReference type="GO" id="GO:0000122">
    <property type="term" value="P:negative regulation of transcription by RNA polymerase II"/>
    <property type="evidence" value="ECO:0000315"/>
    <property type="project" value="SGD"/>
</dbReference>
<dbReference type="GO" id="GO:0045944">
    <property type="term" value="P:positive regulation of transcription by RNA polymerase II"/>
    <property type="evidence" value="ECO:0000314"/>
    <property type="project" value="SGD"/>
</dbReference>
<dbReference type="GO" id="GO:0010468">
    <property type="term" value="P:regulation of gene expression"/>
    <property type="evidence" value="ECO:0000318"/>
    <property type="project" value="GO_Central"/>
</dbReference>
<dbReference type="GO" id="GO:0071071">
    <property type="term" value="P:regulation of phospholipid biosynthetic process"/>
    <property type="evidence" value="ECO:0000315"/>
    <property type="project" value="SGD"/>
</dbReference>
<dbReference type="FunFam" id="3.30.160.60:FF:001692">
    <property type="entry name" value="Transcriptional activator/repressor GIS1"/>
    <property type="match status" value="1"/>
</dbReference>
<dbReference type="FunFam" id="3.30.160.60:FF:000100">
    <property type="entry name" value="Zinc finger 45-like"/>
    <property type="match status" value="1"/>
</dbReference>
<dbReference type="Gene3D" id="3.30.160.60">
    <property type="entry name" value="Classic Zinc Finger"/>
    <property type="match status" value="2"/>
</dbReference>
<dbReference type="Gene3D" id="2.60.120.650">
    <property type="entry name" value="Cupin"/>
    <property type="match status" value="1"/>
</dbReference>
<dbReference type="InterPro" id="IPR003347">
    <property type="entry name" value="JmjC_dom"/>
</dbReference>
<dbReference type="InterPro" id="IPR003349">
    <property type="entry name" value="JmjN"/>
</dbReference>
<dbReference type="InterPro" id="IPR036236">
    <property type="entry name" value="Znf_C2H2_sf"/>
</dbReference>
<dbReference type="InterPro" id="IPR013087">
    <property type="entry name" value="Znf_C2H2_type"/>
</dbReference>
<dbReference type="PANTHER" id="PTHR10694:SF7">
    <property type="entry name" value="[HISTONE H3]-TRIMETHYL-L-LYSINE(9) DEMETHYLASE"/>
    <property type="match status" value="1"/>
</dbReference>
<dbReference type="PANTHER" id="PTHR10694">
    <property type="entry name" value="LYSINE-SPECIFIC DEMETHYLASE"/>
    <property type="match status" value="1"/>
</dbReference>
<dbReference type="Pfam" id="PF02373">
    <property type="entry name" value="JmjC"/>
    <property type="match status" value="1"/>
</dbReference>
<dbReference type="Pfam" id="PF02375">
    <property type="entry name" value="JmjN"/>
    <property type="match status" value="1"/>
</dbReference>
<dbReference type="Pfam" id="PF00096">
    <property type="entry name" value="zf-C2H2"/>
    <property type="match status" value="1"/>
</dbReference>
<dbReference type="SMART" id="SM00558">
    <property type="entry name" value="JmjC"/>
    <property type="match status" value="1"/>
</dbReference>
<dbReference type="SMART" id="SM00545">
    <property type="entry name" value="JmjN"/>
    <property type="match status" value="1"/>
</dbReference>
<dbReference type="SMART" id="SM00355">
    <property type="entry name" value="ZnF_C2H2"/>
    <property type="match status" value="2"/>
</dbReference>
<dbReference type="SUPFAM" id="SSF57667">
    <property type="entry name" value="beta-beta-alpha zinc fingers"/>
    <property type="match status" value="1"/>
</dbReference>
<dbReference type="SUPFAM" id="SSF51197">
    <property type="entry name" value="Clavaminate synthase-like"/>
    <property type="match status" value="1"/>
</dbReference>
<dbReference type="PROSITE" id="PS51184">
    <property type="entry name" value="JMJC"/>
    <property type="match status" value="1"/>
</dbReference>
<dbReference type="PROSITE" id="PS51183">
    <property type="entry name" value="JMJN"/>
    <property type="match status" value="1"/>
</dbReference>
<dbReference type="PROSITE" id="PS00028">
    <property type="entry name" value="ZINC_FINGER_C2H2_1"/>
    <property type="match status" value="1"/>
</dbReference>
<dbReference type="PROSITE" id="PS50157">
    <property type="entry name" value="ZINC_FINGER_C2H2_2"/>
    <property type="match status" value="2"/>
</dbReference>
<keyword id="KW-0010">Activator</keyword>
<keyword id="KW-0175">Coiled coil</keyword>
<keyword id="KW-0238">DNA-binding</keyword>
<keyword id="KW-0479">Metal-binding</keyword>
<keyword id="KW-0539">Nucleus</keyword>
<keyword id="KW-0597">Phosphoprotein</keyword>
<keyword id="KW-1185">Reference proteome</keyword>
<keyword id="KW-0677">Repeat</keyword>
<keyword id="KW-0678">Repressor</keyword>
<keyword id="KW-0804">Transcription</keyword>
<keyword id="KW-0805">Transcription regulation</keyword>
<keyword id="KW-0862">Zinc</keyword>
<keyword id="KW-0863">Zinc-finger</keyword>
<organism>
    <name type="scientific">Saccharomyces cerevisiae (strain ATCC 204508 / S288c)</name>
    <name type="common">Baker's yeast</name>
    <dbReference type="NCBI Taxonomy" id="559292"/>
    <lineage>
        <taxon>Eukaryota</taxon>
        <taxon>Fungi</taxon>
        <taxon>Dikarya</taxon>
        <taxon>Ascomycota</taxon>
        <taxon>Saccharomycotina</taxon>
        <taxon>Saccharomycetes</taxon>
        <taxon>Saccharomycetales</taxon>
        <taxon>Saccharomycetaceae</taxon>
        <taxon>Saccharomyces</taxon>
    </lineage>
</organism>
<gene>
    <name type="primary">GIS1</name>
    <name type="ordered locus">YDR096W</name>
    <name type="ORF">YD8557.01</name>
</gene>
<comment type="function">
    <text evidence="6 7 8 9">Transcription factor involved in the regulation of gene expression upon nutrient starvation. Recognizes and binds to the post-diauxic-shift element 5'-T[AT]AGGGAT-3' in the promoter region. Can act as a transcriptional activator (e.g. of stress genes like SSA3, HSP12 and HSP26) as well as a repressor (e.g. of pyrophosphate phosphatase DPP1). GIS1 also acts as a DNA damage-responsive transcriptional repressor of photolyase PHR1.</text>
</comment>
<comment type="subcellular location">
    <subcellularLocation>
        <location evidence="3 10">Nucleus</location>
    </subcellularLocation>
</comment>
<comment type="induction">
    <text evidence="8 9">Induced upon nutrient starvation.</text>
</comment>
<comment type="miscellaneous">
    <text evidence="11">Present with 432 molecules/cell in log phase SD medium.</text>
</comment>
<proteinExistence type="evidence at protein level"/>
<protein>
    <recommendedName>
        <fullName>Transcriptional activator/repressor GIS1</fullName>
    </recommendedName>
</protein>
<accession>Q03833</accession>
<accession>D6VS81</accession>
<name>GIS1_YEAST</name>
<sequence>MEIKPVEVIDGVPVFKPSMMEFANFQYFIDEITKFGIENGIVKVIPPKEWLELLEGSPPAESLKTIQLDSPIQQQAKRWDKHENGVFSIENEYDNKSYNLTQWKNLAESLDSRISQGDFNDKTLKENCRVDSQQDCYDLAQLQILESDFWKTIAFSKPFYAVDENSSIFPYDLTLWNLNNLPDSINSSNRRLLTGQSKCIFPWHLDEQNKCSINYLHFGAPKQWYSIPSANTDQFLKILSKEPSSNKENCPAFIRHQNIITSPDFLRKNNIKFNRVVQFQHEFIITFPYCMYSGFNYGYNFGESIEFILDQQAVVRKQPLKCGCGNKKEERKSGPFSNLSYDSNESEQRGSITDNDNDLFQKVRSFDELLNHSSQELQNLEDNKNPLFSNINMNRPQSSSLRSTTPNGVNQFLNMNQTTISRISSPLLSRMMDLSNIVEPTLDDPGSKFKRKVLTPQLPQMNIPSNSSNFGTPSLTNTNSLLSNITATSTNPSTTTNGSQNHNNVNANGINTSAAASINNNISSTNNSANNSSSNNNVSTVPSSMMHSSTLNGTSGLGGDNDDNMLALSLATLANSATASPRLTLPPLSSPMNPNGHTSYNGNMMNNNSGNGSNGSNSYSNGVTTAAATTTSAPHNLSIVSPNPTYSPNPLSLYLTNSKNPLNSGLAPLSPSTSNIPFLKRNNVVTLNISREASKSPISSFVNDYRSPLGVSNPLMYSSTINDYSNGTGIRQNSNNINPLDAGPSFSPLHKKPKILNGNDNSNLDSNNFDYSFTGNKQESNPSILNNNTNNNDNYRTSSMNNNGNNYQAHSSKFGENEVIMSDHGKIYICRECNRQFSSGHHLTRHKKSVHSGEKPHSCPRCGKRFKRRDHVLQHLNKKIPCTQEMENTKLAES</sequence>
<evidence type="ECO:0000255" key="1"/>
<evidence type="ECO:0000255" key="2">
    <source>
        <dbReference type="PROSITE-ProRule" id="PRU00042"/>
    </source>
</evidence>
<evidence type="ECO:0000255" key="3">
    <source>
        <dbReference type="PROSITE-ProRule" id="PRU00537"/>
    </source>
</evidence>
<evidence type="ECO:0000255" key="4">
    <source>
        <dbReference type="PROSITE-ProRule" id="PRU00538"/>
    </source>
</evidence>
<evidence type="ECO:0000256" key="5">
    <source>
        <dbReference type="SAM" id="MobiDB-lite"/>
    </source>
</evidence>
<evidence type="ECO:0000269" key="6">
    <source>
    </source>
</evidence>
<evidence type="ECO:0000269" key="7">
    <source>
    </source>
</evidence>
<evidence type="ECO:0000269" key="8">
    <source>
    </source>
</evidence>
<evidence type="ECO:0000269" key="9">
    <source>
    </source>
</evidence>
<evidence type="ECO:0000269" key="10">
    <source>
    </source>
</evidence>
<evidence type="ECO:0000269" key="11">
    <source>
    </source>
</evidence>
<evidence type="ECO:0007744" key="12">
    <source>
    </source>
</evidence>
<evidence type="ECO:0007744" key="13">
    <source>
    </source>
</evidence>
<feature type="chain" id="PRO_0000046806" description="Transcriptional activator/repressor GIS1">
    <location>
        <begin position="1"/>
        <end position="894"/>
    </location>
</feature>
<feature type="domain" description="JmjN" evidence="3">
    <location>
        <begin position="12"/>
        <end position="53"/>
    </location>
</feature>
<feature type="domain" description="JmjC" evidence="4">
    <location>
        <begin position="170"/>
        <end position="324"/>
    </location>
</feature>
<feature type="zinc finger region" description="C2H2-type 1" evidence="2">
    <location>
        <begin position="828"/>
        <end position="851"/>
    </location>
</feature>
<feature type="zinc finger region" description="C2H2-type 2; atypical" evidence="2">
    <location>
        <begin position="857"/>
        <end position="882"/>
    </location>
</feature>
<feature type="region of interest" description="Disordered" evidence="5">
    <location>
        <begin position="324"/>
        <end position="355"/>
    </location>
</feature>
<feature type="region of interest" description="Disordered" evidence="5">
    <location>
        <begin position="521"/>
        <end position="558"/>
    </location>
</feature>
<feature type="region of interest" description="Disordered" evidence="5">
    <location>
        <begin position="756"/>
        <end position="810"/>
    </location>
</feature>
<feature type="coiled-coil region" evidence="1">
    <location>
        <begin position="90"/>
        <end position="110"/>
    </location>
</feature>
<feature type="coiled-coil region" evidence="1">
    <location>
        <begin position="361"/>
        <end position="385"/>
    </location>
</feature>
<feature type="short sequence motif" description="Bipartite nuclear localization signal">
    <location>
        <begin position="316"/>
        <end position="332"/>
    </location>
</feature>
<feature type="compositionally biased region" description="Polar residues" evidence="5">
    <location>
        <begin position="335"/>
        <end position="354"/>
    </location>
</feature>
<feature type="compositionally biased region" description="Low complexity" evidence="5">
    <location>
        <begin position="521"/>
        <end position="554"/>
    </location>
</feature>
<feature type="compositionally biased region" description="Low complexity" evidence="5">
    <location>
        <begin position="756"/>
        <end position="768"/>
    </location>
</feature>
<feature type="compositionally biased region" description="Polar residues" evidence="5">
    <location>
        <begin position="769"/>
        <end position="785"/>
    </location>
</feature>
<feature type="compositionally biased region" description="Polar residues" evidence="5">
    <location>
        <begin position="795"/>
        <end position="810"/>
    </location>
</feature>
<feature type="modified residue" description="Phosphoserine" evidence="12">
    <location>
        <position position="70"/>
    </location>
</feature>
<feature type="modified residue" description="Phosphoserine" evidence="13">
    <location>
        <position position="343"/>
    </location>
</feature>
<feature type="modified residue" description="Phosphoserine" evidence="13">
    <location>
        <position position="690"/>
    </location>
</feature>
<feature type="modified residue" description="Phosphoserine" evidence="13">
    <location>
        <position position="694"/>
    </location>
</feature>
<feature type="modified residue" description="Phosphoserine" evidence="12 13">
    <location>
        <position position="696"/>
    </location>
</feature>
<feature type="modified residue" description="Phosphoserine" evidence="13">
    <location>
        <position position="734"/>
    </location>
</feature>
<feature type="modified residue" description="Phosphoserine" evidence="12">
    <location>
        <position position="747"/>
    </location>
</feature>